<dbReference type="EMBL" id="AF173639">
    <property type="protein sequence ID" value="AAG45672.1"/>
    <property type="molecule type" value="mRNA"/>
</dbReference>
<dbReference type="EMBL" id="BC007480">
    <property type="protein sequence ID" value="AAH07480.1"/>
    <property type="molecule type" value="mRNA"/>
</dbReference>
<dbReference type="CCDS" id="CCDS16615.1"/>
<dbReference type="RefSeq" id="NP_598599.2">
    <property type="nucleotide sequence ID" value="NM_133838.4"/>
</dbReference>
<dbReference type="PDB" id="5MTV">
    <property type="method" value="X-ray"/>
    <property type="resolution" value="2.79 A"/>
    <property type="chains" value="A=22-541"/>
</dbReference>
<dbReference type="PDB" id="5MVF">
    <property type="method" value="X-ray"/>
    <property type="resolution" value="3.27 A"/>
    <property type="chains" value="A=22-541"/>
</dbReference>
<dbReference type="PDB" id="7SOX">
    <property type="method" value="EM"/>
    <property type="resolution" value="7.60 A"/>
    <property type="chains" value="A/B/C/D/E/F/G/H/I/J/K/L/M/N/O/P=22-535"/>
</dbReference>
<dbReference type="PDBsum" id="5MTV"/>
<dbReference type="PDBsum" id="5MVF"/>
<dbReference type="PDBsum" id="7SOX"/>
<dbReference type="EMDB" id="EMD-25362"/>
<dbReference type="SMR" id="Q9EQP2"/>
<dbReference type="BioGRID" id="221151">
    <property type="interactions" value="13"/>
</dbReference>
<dbReference type="CORUM" id="Q9EQP2"/>
<dbReference type="FunCoup" id="Q9EQP2">
    <property type="interactions" value="2891"/>
</dbReference>
<dbReference type="IntAct" id="Q9EQP2">
    <property type="interactions" value="6"/>
</dbReference>
<dbReference type="STRING" id="10090.ENSMUSP00000028755"/>
<dbReference type="GlyGen" id="Q9EQP2">
    <property type="glycosylation" value="1 site, 1 O-linked glycan (1 site)"/>
</dbReference>
<dbReference type="iPTMnet" id="Q9EQP2"/>
<dbReference type="PhosphoSitePlus" id="Q9EQP2"/>
<dbReference type="jPOST" id="Q9EQP2"/>
<dbReference type="PaxDb" id="10090-ENSMUSP00000028755"/>
<dbReference type="ProteomicsDB" id="277814"/>
<dbReference type="Pumba" id="Q9EQP2"/>
<dbReference type="Antibodypedia" id="23470">
    <property type="antibodies" value="155 antibodies from 29 providers"/>
</dbReference>
<dbReference type="DNASU" id="98878"/>
<dbReference type="Ensembl" id="ENSMUST00000028755.8">
    <property type="protein sequence ID" value="ENSMUSP00000028755.8"/>
    <property type="gene ID" value="ENSMUSG00000027293.14"/>
</dbReference>
<dbReference type="GeneID" id="98878"/>
<dbReference type="KEGG" id="mmu:98878"/>
<dbReference type="UCSC" id="uc008lvd.1">
    <property type="organism name" value="mouse"/>
</dbReference>
<dbReference type="AGR" id="MGI:1919619"/>
<dbReference type="CTD" id="30844"/>
<dbReference type="MGI" id="MGI:1919619">
    <property type="gene designation" value="Ehd4"/>
</dbReference>
<dbReference type="VEuPathDB" id="HostDB:ENSMUSG00000027293"/>
<dbReference type="eggNOG" id="KOG1954">
    <property type="taxonomic scope" value="Eukaryota"/>
</dbReference>
<dbReference type="GeneTree" id="ENSGT00940000158601"/>
<dbReference type="HOGENOM" id="CLU_017595_1_1_1"/>
<dbReference type="InParanoid" id="Q9EQP2"/>
<dbReference type="OMA" id="ISAKKEM"/>
<dbReference type="OrthoDB" id="1716625at2759"/>
<dbReference type="PhylomeDB" id="Q9EQP2"/>
<dbReference type="TreeFam" id="TF314429"/>
<dbReference type="BioGRID-ORCS" id="98878">
    <property type="hits" value="1 hit in 78 CRISPR screens"/>
</dbReference>
<dbReference type="CD-CODE" id="CE726F99">
    <property type="entry name" value="Postsynaptic density"/>
</dbReference>
<dbReference type="ChiTaRS" id="Ehd4">
    <property type="organism name" value="mouse"/>
</dbReference>
<dbReference type="PRO" id="PR:Q9EQP2"/>
<dbReference type="Proteomes" id="UP000000589">
    <property type="component" value="Chromosome 2"/>
</dbReference>
<dbReference type="RNAct" id="Q9EQP2">
    <property type="molecule type" value="protein"/>
</dbReference>
<dbReference type="Bgee" id="ENSMUSG00000027293">
    <property type="expression patterns" value="Expressed in interventricular septum and 248 other cell types or tissues"/>
</dbReference>
<dbReference type="ExpressionAtlas" id="Q9EQP2">
    <property type="expression patterns" value="baseline and differential"/>
</dbReference>
<dbReference type="GO" id="GO:0005912">
    <property type="term" value="C:adherens junction"/>
    <property type="evidence" value="ECO:0000314"/>
    <property type="project" value="UniProt"/>
</dbReference>
<dbReference type="GO" id="GO:0031901">
    <property type="term" value="C:early endosome membrane"/>
    <property type="evidence" value="ECO:0007669"/>
    <property type="project" value="UniProtKB-SubCell"/>
</dbReference>
<dbReference type="GO" id="GO:0005783">
    <property type="term" value="C:endoplasmic reticulum"/>
    <property type="evidence" value="ECO:0007669"/>
    <property type="project" value="Ensembl"/>
</dbReference>
<dbReference type="GO" id="GO:0048471">
    <property type="term" value="C:perinuclear region of cytoplasm"/>
    <property type="evidence" value="ECO:0000314"/>
    <property type="project" value="MGI"/>
</dbReference>
<dbReference type="GO" id="GO:0005886">
    <property type="term" value="C:plasma membrane"/>
    <property type="evidence" value="ECO:0007669"/>
    <property type="project" value="UniProtKB-SubCell"/>
</dbReference>
<dbReference type="GO" id="GO:0055038">
    <property type="term" value="C:recycling endosome membrane"/>
    <property type="evidence" value="ECO:0000250"/>
    <property type="project" value="UniProtKB"/>
</dbReference>
<dbReference type="GO" id="GO:0005524">
    <property type="term" value="F:ATP binding"/>
    <property type="evidence" value="ECO:0007669"/>
    <property type="project" value="UniProtKB-KW"/>
</dbReference>
<dbReference type="GO" id="GO:0005509">
    <property type="term" value="F:calcium ion binding"/>
    <property type="evidence" value="ECO:0007669"/>
    <property type="project" value="InterPro"/>
</dbReference>
<dbReference type="GO" id="GO:0005525">
    <property type="term" value="F:GTP binding"/>
    <property type="evidence" value="ECO:0007669"/>
    <property type="project" value="InterPro"/>
</dbReference>
<dbReference type="GO" id="GO:0030674">
    <property type="term" value="F:protein-macromolecule adaptor activity"/>
    <property type="evidence" value="ECO:0000314"/>
    <property type="project" value="UniProt"/>
</dbReference>
<dbReference type="GO" id="GO:0002042">
    <property type="term" value="P:cell migration involved in sprouting angiogenesis"/>
    <property type="evidence" value="ECO:0000314"/>
    <property type="project" value="UniProt"/>
</dbReference>
<dbReference type="GO" id="GO:0071363">
    <property type="term" value="P:cellular response to growth factor stimulus"/>
    <property type="evidence" value="ECO:0007669"/>
    <property type="project" value="Ensembl"/>
</dbReference>
<dbReference type="GO" id="GO:0032456">
    <property type="term" value="P:endocytic recycling"/>
    <property type="evidence" value="ECO:0000250"/>
    <property type="project" value="UniProtKB"/>
</dbReference>
<dbReference type="GO" id="GO:0006907">
    <property type="term" value="P:pinocytosis"/>
    <property type="evidence" value="ECO:0007669"/>
    <property type="project" value="Ensembl"/>
</dbReference>
<dbReference type="GO" id="GO:0051260">
    <property type="term" value="P:protein homooligomerization"/>
    <property type="evidence" value="ECO:0000250"/>
    <property type="project" value="UniProtKB"/>
</dbReference>
<dbReference type="GO" id="GO:0030100">
    <property type="term" value="P:regulation of endocytosis"/>
    <property type="evidence" value="ECO:0007669"/>
    <property type="project" value="Ensembl"/>
</dbReference>
<dbReference type="CDD" id="cd00052">
    <property type="entry name" value="EH"/>
    <property type="match status" value="1"/>
</dbReference>
<dbReference type="CDD" id="cd09913">
    <property type="entry name" value="EHD"/>
    <property type="match status" value="1"/>
</dbReference>
<dbReference type="FunFam" id="3.40.50.300:FF:000147">
    <property type="entry name" value="EH domain-containing protein 1"/>
    <property type="match status" value="1"/>
</dbReference>
<dbReference type="FunFam" id="1.10.238.10:FF:000038">
    <property type="entry name" value="EH domain-containing protein 3"/>
    <property type="match status" value="1"/>
</dbReference>
<dbReference type="Gene3D" id="1.10.268.20">
    <property type="match status" value="1"/>
</dbReference>
<dbReference type="Gene3D" id="1.10.238.10">
    <property type="entry name" value="EF-hand"/>
    <property type="match status" value="1"/>
</dbReference>
<dbReference type="Gene3D" id="3.40.50.300">
    <property type="entry name" value="P-loop containing nucleotide triphosphate hydrolases"/>
    <property type="match status" value="1"/>
</dbReference>
<dbReference type="InterPro" id="IPR040990">
    <property type="entry name" value="DUF5600"/>
</dbReference>
<dbReference type="InterPro" id="IPR045063">
    <property type="entry name" value="Dynamin_N"/>
</dbReference>
<dbReference type="InterPro" id="IPR011992">
    <property type="entry name" value="EF-hand-dom_pair"/>
</dbReference>
<dbReference type="InterPro" id="IPR018247">
    <property type="entry name" value="EF_Hand_1_Ca_BS"/>
</dbReference>
<dbReference type="InterPro" id="IPR002048">
    <property type="entry name" value="EF_hand_dom"/>
</dbReference>
<dbReference type="InterPro" id="IPR000261">
    <property type="entry name" value="EH_dom"/>
</dbReference>
<dbReference type="InterPro" id="IPR031692">
    <property type="entry name" value="EHD_N"/>
</dbReference>
<dbReference type="InterPro" id="IPR030381">
    <property type="entry name" value="G_DYNAMIN_dom"/>
</dbReference>
<dbReference type="InterPro" id="IPR027417">
    <property type="entry name" value="P-loop_NTPase"/>
</dbReference>
<dbReference type="PANTHER" id="PTHR11216:SF170">
    <property type="entry name" value="DYNAMIN ASSOCIATED PROTEIN 160, ISOFORM D"/>
    <property type="match status" value="1"/>
</dbReference>
<dbReference type="PANTHER" id="PTHR11216">
    <property type="entry name" value="EH DOMAIN"/>
    <property type="match status" value="1"/>
</dbReference>
<dbReference type="Pfam" id="PF18150">
    <property type="entry name" value="DUF5600"/>
    <property type="match status" value="1"/>
</dbReference>
<dbReference type="Pfam" id="PF00350">
    <property type="entry name" value="Dynamin_N"/>
    <property type="match status" value="1"/>
</dbReference>
<dbReference type="Pfam" id="PF12763">
    <property type="entry name" value="EH"/>
    <property type="match status" value="1"/>
</dbReference>
<dbReference type="Pfam" id="PF16880">
    <property type="entry name" value="EHD_N"/>
    <property type="match status" value="1"/>
</dbReference>
<dbReference type="SMART" id="SM00027">
    <property type="entry name" value="EH"/>
    <property type="match status" value="1"/>
</dbReference>
<dbReference type="SUPFAM" id="SSF47473">
    <property type="entry name" value="EF-hand"/>
    <property type="match status" value="1"/>
</dbReference>
<dbReference type="SUPFAM" id="SSF52540">
    <property type="entry name" value="P-loop containing nucleoside triphosphate hydrolases"/>
    <property type="match status" value="1"/>
</dbReference>
<dbReference type="PROSITE" id="PS00018">
    <property type="entry name" value="EF_HAND_1"/>
    <property type="match status" value="1"/>
</dbReference>
<dbReference type="PROSITE" id="PS50222">
    <property type="entry name" value="EF_HAND_2"/>
    <property type="match status" value="1"/>
</dbReference>
<dbReference type="PROSITE" id="PS50031">
    <property type="entry name" value="EH"/>
    <property type="match status" value="1"/>
</dbReference>
<dbReference type="PROSITE" id="PS51718">
    <property type="entry name" value="G_DYNAMIN_2"/>
    <property type="match status" value="1"/>
</dbReference>
<reference key="1">
    <citation type="submission" date="1999-07" db="EMBL/GenBank/DDBJ databases">
        <title>MPAST2, a novel murine isoform of the PAST protein family.</title>
        <authorList>
            <person name="Plomann M."/>
            <person name="Behrendt D."/>
            <person name="Ritter B."/>
            <person name="Modregger J."/>
            <person name="Halbach A."/>
            <person name="Paulsson M."/>
        </authorList>
    </citation>
    <scope>NUCLEOTIDE SEQUENCE [MRNA]</scope>
    <source>
        <strain>ICR</strain>
    </source>
</reference>
<reference key="2">
    <citation type="journal article" date="2004" name="Genome Res.">
        <title>The status, quality, and expansion of the NIH full-length cDNA project: the Mammalian Gene Collection (MGC).</title>
        <authorList>
            <consortium name="The MGC Project Team"/>
        </authorList>
    </citation>
    <scope>NUCLEOTIDE SEQUENCE [LARGE SCALE MRNA]</scope>
    <source>
        <strain>Czech II</strain>
        <tissue>Mammary gland</tissue>
    </source>
</reference>
<reference key="3">
    <citation type="journal article" date="2005" name="Mol. Biol. Cell">
        <title>EHD proteins associate with syndapin I and II and such interactions play a crucial role in endosomal recycling.</title>
        <authorList>
            <person name="Braun A."/>
            <person name="Pinyol R."/>
            <person name="Dahlhaus R."/>
            <person name="Koch D."/>
            <person name="Fonarev P."/>
            <person name="Grant B.D."/>
            <person name="Kessels M.M."/>
            <person name="Qualmann B."/>
        </authorList>
    </citation>
    <scope>FUNCTION</scope>
</reference>
<reference key="4">
    <citation type="journal article" date="2010" name="Cell">
        <title>A tissue-specific atlas of mouse protein phosphorylation and expression.</title>
        <authorList>
            <person name="Huttlin E.L."/>
            <person name="Jedrychowski M.P."/>
            <person name="Elias J.E."/>
            <person name="Goswami T."/>
            <person name="Rad R."/>
            <person name="Beausoleil S.A."/>
            <person name="Villen J."/>
            <person name="Haas W."/>
            <person name="Sowa M.E."/>
            <person name="Gygi S.P."/>
        </authorList>
    </citation>
    <scope>PHOSPHORYLATION [LARGE SCALE ANALYSIS] AT SER-15 AND SER-459</scope>
    <scope>IDENTIFICATION BY MASS SPECTROMETRY [LARGE SCALE ANALYSIS]</scope>
    <source>
        <tissue>Brain</tissue>
        <tissue>Brown adipose tissue</tissue>
        <tissue>Heart</tissue>
        <tissue>Kidney</tissue>
        <tissue>Liver</tissue>
        <tissue>Lung</tissue>
        <tissue>Pancreas</tissue>
        <tissue>Spleen</tissue>
        <tissue>Testis</tissue>
    </source>
</reference>
<reference key="5">
    <citation type="journal article" date="2011" name="J. Biol. Chem.">
        <title>Endocytic recycling proteins EHD1 and EHD2 interact with fer-1-like-5 (Fer1L5) and mediate myoblast fusion.</title>
        <authorList>
            <person name="Posey A.D. Jr."/>
            <person name="Pytel P."/>
            <person name="Gardikiotes K."/>
            <person name="Demonbreun A.R."/>
            <person name="Rainey M."/>
            <person name="George M."/>
            <person name="Band H."/>
            <person name="McNally E.M."/>
        </authorList>
    </citation>
    <scope>SUBCELLULAR LOCATION</scope>
</reference>
<reference key="6">
    <citation type="journal article" date="2021" name="Nat. Commun.">
        <title>A junctional PACSIN2/EHD4/MICAL-L1 complex coordinates VE-cadherin trafficking for endothelial migration and angiogenesis.</title>
        <authorList>
            <person name="Malinova T.S."/>
            <person name="Angulo-Urarte A."/>
            <person name="Nuechel J."/>
            <person name="Tauber M."/>
            <person name="van der Stoel M.M."/>
            <person name="Janssen V."/>
            <person name="de Haan A."/>
            <person name="Groenen A.G."/>
            <person name="Tebbens M."/>
            <person name="Graupera M."/>
            <person name="Plomann M."/>
            <person name="Huveneers S."/>
        </authorList>
    </citation>
    <scope>FUNCTION</scope>
    <scope>SUBCELLULAR LOCATION</scope>
    <scope>INTERACTION WITH PACSIN2 AND MICALL1</scope>
</reference>
<feature type="chain" id="PRO_0000146115" description="EH domain-containing protein 4">
    <location>
        <begin position="1"/>
        <end position="541"/>
    </location>
</feature>
<feature type="domain" description="Dynamin-type G" evidence="7">
    <location>
        <begin position="58"/>
        <end position="289"/>
    </location>
</feature>
<feature type="domain" description="EH" evidence="5">
    <location>
        <begin position="447"/>
        <end position="535"/>
    </location>
</feature>
<feature type="domain" description="EF-hand" evidence="6">
    <location>
        <begin position="479"/>
        <end position="514"/>
    </location>
</feature>
<feature type="region of interest" description="Disordered" evidence="8">
    <location>
        <begin position="1"/>
        <end position="20"/>
    </location>
</feature>
<feature type="region of interest" description="G1 motif" evidence="7">
    <location>
        <begin position="68"/>
        <end position="75"/>
    </location>
</feature>
<feature type="region of interest" description="G2 motif" evidence="7">
    <location>
        <begin position="94"/>
        <end position="95"/>
    </location>
</feature>
<feature type="region of interest" description="G3 motif" evidence="7">
    <location>
        <begin position="156"/>
        <end position="159"/>
    </location>
</feature>
<feature type="region of interest" description="G4 motif" evidence="7">
    <location>
        <begin position="222"/>
        <end position="225"/>
    </location>
</feature>
<feature type="region of interest" description="G5 motif" evidence="7">
    <location>
        <position position="246"/>
    </location>
</feature>
<feature type="binding site" evidence="1">
    <location>
        <begin position="68"/>
        <end position="75"/>
    </location>
    <ligand>
        <name>ATP</name>
        <dbReference type="ChEBI" id="CHEBI:30616"/>
    </ligand>
</feature>
<feature type="binding site" evidence="1">
    <location>
        <position position="223"/>
    </location>
    <ligand>
        <name>ATP</name>
        <dbReference type="ChEBI" id="CHEBI:30616"/>
    </ligand>
</feature>
<feature type="binding site" evidence="1">
    <location>
        <position position="261"/>
    </location>
    <ligand>
        <name>ATP</name>
        <dbReference type="ChEBI" id="CHEBI:30616"/>
    </ligand>
</feature>
<feature type="binding site" evidence="6">
    <location>
        <position position="492"/>
    </location>
    <ligand>
        <name>Ca(2+)</name>
        <dbReference type="ChEBI" id="CHEBI:29108"/>
    </ligand>
</feature>
<feature type="binding site" evidence="6">
    <location>
        <position position="494"/>
    </location>
    <ligand>
        <name>Ca(2+)</name>
        <dbReference type="ChEBI" id="CHEBI:29108"/>
    </ligand>
</feature>
<feature type="binding site" evidence="6">
    <location>
        <position position="496"/>
    </location>
    <ligand>
        <name>Ca(2+)</name>
        <dbReference type="ChEBI" id="CHEBI:29108"/>
    </ligand>
</feature>
<feature type="binding site" evidence="6">
    <location>
        <position position="498"/>
    </location>
    <ligand>
        <name>Ca(2+)</name>
        <dbReference type="ChEBI" id="CHEBI:29108"/>
    </ligand>
</feature>
<feature type="binding site" evidence="6">
    <location>
        <position position="503"/>
    </location>
    <ligand>
        <name>Ca(2+)</name>
        <dbReference type="ChEBI" id="CHEBI:29108"/>
    </ligand>
</feature>
<feature type="modified residue" description="N-acetylmethionine" evidence="3">
    <location>
        <position position="1"/>
    </location>
</feature>
<feature type="modified residue" description="Phosphoserine" evidence="15">
    <location>
        <position position="15"/>
    </location>
</feature>
<feature type="modified residue" description="Phosphoserine" evidence="2">
    <location>
        <position position="162"/>
    </location>
</feature>
<feature type="modified residue" description="Phosphotyrosine" evidence="2">
    <location>
        <position position="451"/>
    </location>
</feature>
<feature type="modified residue" description="Phosphoserine" evidence="15">
    <location>
        <position position="459"/>
    </location>
</feature>
<feature type="helix" evidence="16">
    <location>
        <begin position="22"/>
        <end position="35"/>
    </location>
</feature>
<feature type="helix" evidence="16">
    <location>
        <begin position="37"/>
        <end position="42"/>
    </location>
</feature>
<feature type="helix" evidence="16">
    <location>
        <begin position="45"/>
        <end position="48"/>
    </location>
</feature>
<feature type="helix" evidence="16">
    <location>
        <begin position="55"/>
        <end position="57"/>
    </location>
</feature>
<feature type="strand" evidence="16">
    <location>
        <begin position="63"/>
        <end position="69"/>
    </location>
</feature>
<feature type="helix" evidence="16">
    <location>
        <begin position="74"/>
        <end position="82"/>
    </location>
</feature>
<feature type="turn" evidence="16">
    <location>
        <begin position="95"/>
        <end position="97"/>
    </location>
</feature>
<feature type="strand" evidence="16">
    <location>
        <begin position="100"/>
        <end position="105"/>
    </location>
</feature>
<feature type="strand" evidence="16">
    <location>
        <begin position="107"/>
        <end position="113"/>
    </location>
</feature>
<feature type="helix" evidence="16">
    <location>
        <begin position="114"/>
        <end position="117"/>
    </location>
</feature>
<feature type="helix" evidence="16">
    <location>
        <begin position="127"/>
        <end position="130"/>
    </location>
</feature>
<feature type="turn" evidence="16">
    <location>
        <begin position="133"/>
        <end position="135"/>
    </location>
</feature>
<feature type="helix" evidence="16">
    <location>
        <begin position="136"/>
        <end position="138"/>
    </location>
</feature>
<feature type="strand" evidence="16">
    <location>
        <begin position="139"/>
        <end position="144"/>
    </location>
</feature>
<feature type="helix" evidence="16">
    <location>
        <begin position="148"/>
        <end position="150"/>
    </location>
</feature>
<feature type="strand" evidence="16">
    <location>
        <begin position="153"/>
        <end position="156"/>
    </location>
</feature>
<feature type="helix" evidence="16">
    <location>
        <begin position="174"/>
        <end position="184"/>
    </location>
</feature>
<feature type="strand" evidence="16">
    <location>
        <begin position="186"/>
        <end position="193"/>
    </location>
</feature>
<feature type="helix" evidence="16">
    <location>
        <begin position="194"/>
        <end position="196"/>
    </location>
</feature>
<feature type="helix" evidence="16">
    <location>
        <begin position="201"/>
        <end position="209"/>
    </location>
</feature>
<feature type="turn" evidence="16">
    <location>
        <begin position="210"/>
        <end position="212"/>
    </location>
</feature>
<feature type="helix" evidence="16">
    <location>
        <begin position="214"/>
        <end position="216"/>
    </location>
</feature>
<feature type="strand" evidence="16">
    <location>
        <begin position="217"/>
        <end position="222"/>
    </location>
</feature>
<feature type="helix" evidence="16">
    <location>
        <begin position="229"/>
        <end position="247"/>
    </location>
</feature>
<feature type="strand" evidence="16">
    <location>
        <begin position="255"/>
        <end position="258"/>
    </location>
</feature>
<feature type="strand" evidence="16">
    <location>
        <begin position="261"/>
        <end position="263"/>
    </location>
</feature>
<feature type="helix" evidence="16">
    <location>
        <begin position="268"/>
        <end position="270"/>
    </location>
</feature>
<feature type="helix" evidence="16">
    <location>
        <begin position="271"/>
        <end position="319"/>
    </location>
</feature>
<feature type="strand" evidence="16">
    <location>
        <begin position="323"/>
        <end position="325"/>
    </location>
</feature>
<feature type="helix" evidence="16">
    <location>
        <begin position="327"/>
        <end position="336"/>
    </location>
</feature>
<feature type="helix" evidence="16">
    <location>
        <begin position="338"/>
        <end position="347"/>
    </location>
</feature>
<feature type="turn" evidence="16">
    <location>
        <begin position="348"/>
        <end position="350"/>
    </location>
</feature>
<feature type="strand" evidence="17">
    <location>
        <begin position="353"/>
        <end position="356"/>
    </location>
</feature>
<feature type="helix" evidence="16">
    <location>
        <begin position="359"/>
        <end position="366"/>
    </location>
</feature>
<feature type="helix" evidence="16">
    <location>
        <begin position="371"/>
        <end position="373"/>
    </location>
</feature>
<feature type="helix" evidence="16">
    <location>
        <begin position="379"/>
        <end position="390"/>
    </location>
</feature>
<feature type="helix" evidence="16">
    <location>
        <begin position="392"/>
        <end position="401"/>
    </location>
</feature>
<accession>Q9EQP2</accession>
<proteinExistence type="evidence at protein level"/>
<sequence length="541" mass="61481">MFSWMGRQAGGRERSGGMDAVQTVTGGLRSLYQRKVLPLEEAYRFHEFHSPALEDADFENKPMILLVGQYSTGKTTFIRYLLEQDFPGMRIGPEPTTDSFIAVMYGETEGSTPGNALVVDPKKPFRKLSRFGNAFLNRFMCSQLPNQVLKSISIIDSPGILSGEKQRISRGYDFCQVLQWFAERVDRIILLFDAHKLDISDEFSEAIKAFRGQDDKIRVVLNKADQVDTQQLMRVYGALMWSLGKVINTPEVLRVYIGSFWAQPLQNTDNRRLFEAEAQDLFRDIQSLPQKAAVRKLNDLIKRARLAKVHAYIISYLKKEMPNMFGKENKKRELIYRLPEIYVQLQREYQISAGDFPEVKAMQEQLENYDFTKFHSLKPKLIEAVDNMLTNKISSLMGLISQEEMNMPTQMVQGGAFDGTTEGPFNQGYGEGAKEGADEEEWVVAKDKPVYDELFYTLSPINGKISGVNAKKEMVTSKLPNSVLGKIWKLADCDCDGMLDEEEFALAKHLIKIKLDGYELPNSLPPHLVPPSHRKSLPKAD</sequence>
<protein>
    <recommendedName>
        <fullName evidence="13">EH domain-containing protein 4</fullName>
    </recommendedName>
    <alternativeName>
        <fullName evidence="13">PAST homolog 2</fullName>
        <shortName evidence="12">mPAST2</shortName>
    </alternativeName>
</protein>
<name>EHD4_MOUSE</name>
<evidence type="ECO:0000250" key="1">
    <source>
        <dbReference type="UniProtKB" id="Q8BH64"/>
    </source>
</evidence>
<evidence type="ECO:0000250" key="2">
    <source>
        <dbReference type="UniProtKB" id="Q9H223"/>
    </source>
</evidence>
<evidence type="ECO:0000250" key="3">
    <source>
        <dbReference type="UniProtKB" id="Q9H4M9"/>
    </source>
</evidence>
<evidence type="ECO:0000250" key="4">
    <source>
        <dbReference type="UniProtKB" id="Q9WVK4"/>
    </source>
</evidence>
<evidence type="ECO:0000255" key="5">
    <source>
        <dbReference type="PROSITE-ProRule" id="PRU00077"/>
    </source>
</evidence>
<evidence type="ECO:0000255" key="6">
    <source>
        <dbReference type="PROSITE-ProRule" id="PRU00448"/>
    </source>
</evidence>
<evidence type="ECO:0000255" key="7">
    <source>
        <dbReference type="PROSITE-ProRule" id="PRU01055"/>
    </source>
</evidence>
<evidence type="ECO:0000256" key="8">
    <source>
        <dbReference type="SAM" id="MobiDB-lite"/>
    </source>
</evidence>
<evidence type="ECO:0000269" key="9">
    <source>
    </source>
</evidence>
<evidence type="ECO:0000269" key="10">
    <source>
    </source>
</evidence>
<evidence type="ECO:0000269" key="11">
    <source>
    </source>
</evidence>
<evidence type="ECO:0000303" key="12">
    <source ref="1"/>
</evidence>
<evidence type="ECO:0000305" key="13"/>
<evidence type="ECO:0000312" key="14">
    <source>
        <dbReference type="MGI" id="MGI:1919619"/>
    </source>
</evidence>
<evidence type="ECO:0007744" key="15">
    <source>
    </source>
</evidence>
<evidence type="ECO:0007829" key="16">
    <source>
        <dbReference type="PDB" id="5MTV"/>
    </source>
</evidence>
<evidence type="ECO:0007829" key="17">
    <source>
        <dbReference type="PDB" id="5MVF"/>
    </source>
</evidence>
<organism>
    <name type="scientific">Mus musculus</name>
    <name type="common">Mouse</name>
    <dbReference type="NCBI Taxonomy" id="10090"/>
    <lineage>
        <taxon>Eukaryota</taxon>
        <taxon>Metazoa</taxon>
        <taxon>Chordata</taxon>
        <taxon>Craniata</taxon>
        <taxon>Vertebrata</taxon>
        <taxon>Euteleostomi</taxon>
        <taxon>Mammalia</taxon>
        <taxon>Eutheria</taxon>
        <taxon>Euarchontoglires</taxon>
        <taxon>Glires</taxon>
        <taxon>Rodentia</taxon>
        <taxon>Myomorpha</taxon>
        <taxon>Muroidea</taxon>
        <taxon>Muridae</taxon>
        <taxon>Murinae</taxon>
        <taxon>Mus</taxon>
        <taxon>Mus</taxon>
    </lineage>
</organism>
<gene>
    <name evidence="14" type="primary">Ehd4</name>
    <name evidence="12" type="synonym">Past2</name>
</gene>
<comment type="function">
    <text evidence="9 11">ATP- and membrane-binding protein that probably controls membrane reorganization/tubulation upon ATP hydrolysis. Plays a role in early endosomal transport (PubMed:15930129). During sprouting angiogenesis, in complex with PACSIN2 and MICALL1, forms recycling endosome-like tubular structure at asymmetric adherens junctions to control CDH5 trafficking (PubMed:33972531).</text>
</comment>
<comment type="subunit">
    <text evidence="2 11">Homooligomer, and heterooligomer with EHD1, EHD2 and EHD3. Forms a complex with EHD4 and MICALL1; the complex controls CDH5 trafficking and coordinates angiogenesis (PubMed:33972531).</text>
</comment>
<comment type="interaction">
    <interactant intactId="EBI-491022">
        <id>Q9EQP2</id>
    </interactant>
    <interactant intactId="EBI-491201">
        <id>Q9QY17</id>
        <label>Pacsin2</label>
    </interactant>
    <organismsDiffer>true</organismsDiffer>
    <experiments>4</experiments>
</comment>
<comment type="interaction">
    <interactant intactId="EBI-491022">
        <id>Q9EQP2</id>
    </interactant>
    <interactant intactId="EBI-492883">
        <id>Q9Z2P6</id>
        <label>Snap29</label>
    </interactant>
    <organismsDiffer>true</organismsDiffer>
    <experiments>2</experiments>
</comment>
<comment type="subcellular location">
    <subcellularLocation>
        <location evidence="2">Early endosome membrane</location>
        <topology evidence="13">Peripheral membrane protein</topology>
        <orientation evidence="13">Cytoplasmic side</orientation>
    </subcellularLocation>
    <subcellularLocation>
        <location evidence="2">Recycling endosome membrane</location>
        <topology evidence="13">Peripheral membrane protein</topology>
        <orientation evidence="13">Cytoplasmic side</orientation>
    </subcellularLocation>
    <subcellularLocation>
        <location evidence="10">Cell membrane</location>
        <topology evidence="13">Peripheral membrane protein</topology>
        <orientation evidence="13">Cytoplasmic side</orientation>
    </subcellularLocation>
    <subcellularLocation>
        <location evidence="11">Cell junction</location>
        <location evidence="11">Adherens junction</location>
    </subcellularLocation>
</comment>
<comment type="domain">
    <text evidence="4">The EH domain interacts with Asn-Pro-Phe (NPF) motifs of target proteins.</text>
</comment>
<comment type="similarity">
    <text evidence="7">Belongs to the TRAFAC class dynamin-like GTPase superfamily. Dynamin/Fzo/YdjA family. EHD subfamily.</text>
</comment>
<keyword id="KW-0002">3D-structure</keyword>
<keyword id="KW-0007">Acetylation</keyword>
<keyword id="KW-0067">ATP-binding</keyword>
<keyword id="KW-0106">Calcium</keyword>
<keyword id="KW-0965">Cell junction</keyword>
<keyword id="KW-1003">Cell membrane</keyword>
<keyword id="KW-0967">Endosome</keyword>
<keyword id="KW-0472">Membrane</keyword>
<keyword id="KW-0479">Metal-binding</keyword>
<keyword id="KW-0547">Nucleotide-binding</keyword>
<keyword id="KW-0597">Phosphoprotein</keyword>
<keyword id="KW-1185">Reference proteome</keyword>